<keyword id="KW-0007">Acetylation</keyword>
<keyword id="KW-0238">DNA-binding</keyword>
<keyword id="KW-1017">Isopeptide bond</keyword>
<keyword id="KW-0479">Metal-binding</keyword>
<keyword id="KW-0539">Nucleus</keyword>
<keyword id="KW-1267">Proteomics identification</keyword>
<keyword id="KW-1185">Reference proteome</keyword>
<keyword id="KW-0677">Repeat</keyword>
<keyword id="KW-0804">Transcription</keyword>
<keyword id="KW-0805">Transcription regulation</keyword>
<keyword id="KW-0832">Ubl conjugation</keyword>
<keyword id="KW-0862">Zinc</keyword>
<keyword id="KW-0863">Zinc-finger</keyword>
<evidence type="ECO:0000255" key="1">
    <source>
        <dbReference type="PROSITE-ProRule" id="PRU00042"/>
    </source>
</evidence>
<evidence type="ECO:0000255" key="2">
    <source>
        <dbReference type="PROSITE-ProRule" id="PRU00119"/>
    </source>
</evidence>
<evidence type="ECO:0000305" key="3"/>
<evidence type="ECO:0007744" key="4">
    <source>
    </source>
</evidence>
<evidence type="ECO:0007744" key="5">
    <source>
    </source>
</evidence>
<comment type="function">
    <text>May be involved in transcriptional regulation.</text>
</comment>
<comment type="subcellular location">
    <subcellularLocation>
        <location evidence="3">Nucleus</location>
    </subcellularLocation>
</comment>
<comment type="similarity">
    <text evidence="3">Belongs to the krueppel C2H2-type zinc-finger protein family.</text>
</comment>
<comment type="sequence caution" evidence="3">
    <conflict type="erroneous gene model prediction">
        <sequence resource="EMBL-CDS" id="AAB97932"/>
    </conflict>
</comment>
<protein>
    <recommendedName>
        <fullName>Zinc finger protein 749</fullName>
    </recommendedName>
</protein>
<accession>O43361</accession>
<organism>
    <name type="scientific">Homo sapiens</name>
    <name type="common">Human</name>
    <dbReference type="NCBI Taxonomy" id="9606"/>
    <lineage>
        <taxon>Eukaryota</taxon>
        <taxon>Metazoa</taxon>
        <taxon>Chordata</taxon>
        <taxon>Craniata</taxon>
        <taxon>Vertebrata</taxon>
        <taxon>Euteleostomi</taxon>
        <taxon>Mammalia</taxon>
        <taxon>Eutheria</taxon>
        <taxon>Euarchontoglires</taxon>
        <taxon>Primates</taxon>
        <taxon>Haplorrhini</taxon>
        <taxon>Catarrhini</taxon>
        <taxon>Hominidae</taxon>
        <taxon>Homo</taxon>
    </lineage>
</organism>
<feature type="chain" id="PRO_0000274397" description="Zinc finger protein 749">
    <location>
        <begin position="1"/>
        <end position="778"/>
    </location>
</feature>
<feature type="domain" description="KRAB" evidence="2">
    <location>
        <begin position="8"/>
        <end position="101"/>
    </location>
</feature>
<feature type="zinc finger region" description="C2H2-type 1; degenerate" evidence="1">
    <location>
        <begin position="152"/>
        <end position="174"/>
    </location>
</feature>
<feature type="zinc finger region" description="C2H2-type 2; degenerate" evidence="1">
    <location>
        <begin position="196"/>
        <end position="218"/>
    </location>
</feature>
<feature type="zinc finger region" description="C2H2-type 3; degenerate" evidence="1">
    <location>
        <begin position="224"/>
        <end position="246"/>
    </location>
</feature>
<feature type="zinc finger region" description="C2H2-type 4; degenerate" evidence="1">
    <location>
        <begin position="252"/>
        <end position="274"/>
    </location>
</feature>
<feature type="zinc finger region" description="C2H2-type 5" evidence="1">
    <location>
        <begin position="298"/>
        <end position="320"/>
    </location>
</feature>
<feature type="zinc finger region" description="C2H2-type 6" evidence="1">
    <location>
        <begin position="326"/>
        <end position="348"/>
    </location>
</feature>
<feature type="zinc finger region" description="C2H2-type 7" evidence="1">
    <location>
        <begin position="354"/>
        <end position="376"/>
    </location>
</feature>
<feature type="zinc finger region" description="C2H2-type 8" evidence="1">
    <location>
        <begin position="382"/>
        <end position="404"/>
    </location>
</feature>
<feature type="zinc finger region" description="C2H2-type 9" evidence="1">
    <location>
        <begin position="410"/>
        <end position="432"/>
    </location>
</feature>
<feature type="zinc finger region" description="C2H2-type 10" evidence="1">
    <location>
        <begin position="438"/>
        <end position="460"/>
    </location>
</feature>
<feature type="zinc finger region" description="C2H2-type 11" evidence="1">
    <location>
        <begin position="483"/>
        <end position="505"/>
    </location>
</feature>
<feature type="zinc finger region" description="C2H2-type 12" evidence="1">
    <location>
        <begin position="511"/>
        <end position="533"/>
    </location>
</feature>
<feature type="zinc finger region" description="C2H2-type 13; degenerate" evidence="1">
    <location>
        <begin position="556"/>
        <end position="578"/>
    </location>
</feature>
<feature type="zinc finger region" description="C2H2-type 14" evidence="1">
    <location>
        <begin position="584"/>
        <end position="606"/>
    </location>
</feature>
<feature type="zinc finger region" description="C2H2-type 15" evidence="1">
    <location>
        <begin position="612"/>
        <end position="634"/>
    </location>
</feature>
<feature type="zinc finger region" description="C2H2-type 16" evidence="1">
    <location>
        <begin position="640"/>
        <end position="662"/>
    </location>
</feature>
<feature type="zinc finger region" description="C2H2-type 17; atypical" evidence="1">
    <location>
        <begin position="668"/>
        <end position="690"/>
    </location>
</feature>
<feature type="zinc finger region" description="C2H2-type 18" evidence="1">
    <location>
        <begin position="696"/>
        <end position="718"/>
    </location>
</feature>
<feature type="zinc finger region" description="C2H2-type 19; degenerate" evidence="1">
    <location>
        <begin position="751"/>
        <end position="773"/>
    </location>
</feature>
<feature type="modified residue" description="N6-acetyllysine" evidence="4">
    <location>
        <position position="466"/>
    </location>
</feature>
<feature type="modified residue" description="N6-acetyllysine" evidence="4">
    <location>
        <position position="539"/>
    </location>
</feature>
<feature type="cross-link" description="Glycyl lysine isopeptide (Lys-Gly) (interchain with G-Cter in SUMO2)" evidence="5">
    <location>
        <position position="761"/>
    </location>
</feature>
<feature type="cross-link" description="Glycyl lysine isopeptide (Lys-Gly) (interchain with G-Cter in SUMO2)" evidence="5">
    <location>
        <position position="768"/>
    </location>
</feature>
<feature type="sequence variant" id="VAR_030278" description="In dbSNP:rs12986235.">
    <original>Q</original>
    <variation>R</variation>
    <location>
        <position position="243"/>
    </location>
</feature>
<feature type="sequence variant" id="VAR_030279" description="In dbSNP:rs2240038.">
    <original>A</original>
    <variation>T</variation>
    <location>
        <position position="405"/>
    </location>
</feature>
<feature type="sequence variant" id="VAR_030280" description="In dbSNP:rs7246856.">
    <original>I</original>
    <variation>R</variation>
    <location>
        <position position="771"/>
    </location>
</feature>
<feature type="sequence conflict" description="In Ref. 2; AK122794." evidence="3" ref="2">
    <location>
        <position position="177"/>
    </location>
</feature>
<feature type="sequence conflict" description="In Ref. 2; AK122794." evidence="3" ref="2">
    <original>Y</original>
    <variation>C</variation>
    <location>
        <position position="679"/>
    </location>
</feature>
<name>ZN749_HUMAN</name>
<proteinExistence type="evidence at protein level"/>
<reference key="1">
    <citation type="journal article" date="2004" name="Nature">
        <title>The DNA sequence and biology of human chromosome 19.</title>
        <authorList>
            <person name="Grimwood J."/>
            <person name="Gordon L.A."/>
            <person name="Olsen A.S."/>
            <person name="Terry A."/>
            <person name="Schmutz J."/>
            <person name="Lamerdin J.E."/>
            <person name="Hellsten U."/>
            <person name="Goodstein D."/>
            <person name="Couronne O."/>
            <person name="Tran-Gyamfi M."/>
            <person name="Aerts A."/>
            <person name="Altherr M."/>
            <person name="Ashworth L."/>
            <person name="Bajorek E."/>
            <person name="Black S."/>
            <person name="Branscomb E."/>
            <person name="Caenepeel S."/>
            <person name="Carrano A.V."/>
            <person name="Caoile C."/>
            <person name="Chan Y.M."/>
            <person name="Christensen M."/>
            <person name="Cleland C.A."/>
            <person name="Copeland A."/>
            <person name="Dalin E."/>
            <person name="Dehal P."/>
            <person name="Denys M."/>
            <person name="Detter J.C."/>
            <person name="Escobar J."/>
            <person name="Flowers D."/>
            <person name="Fotopulos D."/>
            <person name="Garcia C."/>
            <person name="Georgescu A.M."/>
            <person name="Glavina T."/>
            <person name="Gomez M."/>
            <person name="Gonzales E."/>
            <person name="Groza M."/>
            <person name="Hammon N."/>
            <person name="Hawkins T."/>
            <person name="Haydu L."/>
            <person name="Ho I."/>
            <person name="Huang W."/>
            <person name="Israni S."/>
            <person name="Jett J."/>
            <person name="Kadner K."/>
            <person name="Kimball H."/>
            <person name="Kobayashi A."/>
            <person name="Larionov V."/>
            <person name="Leem S.-H."/>
            <person name="Lopez F."/>
            <person name="Lou Y."/>
            <person name="Lowry S."/>
            <person name="Malfatti S."/>
            <person name="Martinez D."/>
            <person name="McCready P.M."/>
            <person name="Medina C."/>
            <person name="Morgan J."/>
            <person name="Nelson K."/>
            <person name="Nolan M."/>
            <person name="Ovcharenko I."/>
            <person name="Pitluck S."/>
            <person name="Pollard M."/>
            <person name="Popkie A.P."/>
            <person name="Predki P."/>
            <person name="Quan G."/>
            <person name="Ramirez L."/>
            <person name="Rash S."/>
            <person name="Retterer J."/>
            <person name="Rodriguez A."/>
            <person name="Rogers S."/>
            <person name="Salamov A."/>
            <person name="Salazar A."/>
            <person name="She X."/>
            <person name="Smith D."/>
            <person name="Slezak T."/>
            <person name="Solovyev V."/>
            <person name="Thayer N."/>
            <person name="Tice H."/>
            <person name="Tsai M."/>
            <person name="Ustaszewska A."/>
            <person name="Vo N."/>
            <person name="Wagner M."/>
            <person name="Wheeler J."/>
            <person name="Wu K."/>
            <person name="Xie G."/>
            <person name="Yang J."/>
            <person name="Dubchak I."/>
            <person name="Furey T.S."/>
            <person name="DeJong P."/>
            <person name="Dickson M."/>
            <person name="Gordon D."/>
            <person name="Eichler E.E."/>
            <person name="Pennacchio L.A."/>
            <person name="Richardson P."/>
            <person name="Stubbs L."/>
            <person name="Rokhsar D.S."/>
            <person name="Myers R.M."/>
            <person name="Rubin E.M."/>
            <person name="Lucas S.M."/>
        </authorList>
    </citation>
    <scope>NUCLEOTIDE SEQUENCE [LARGE SCALE GENOMIC DNA]</scope>
</reference>
<reference key="2">
    <citation type="journal article" date="2004" name="Nat. Genet.">
        <title>Complete sequencing and characterization of 21,243 full-length human cDNAs.</title>
        <authorList>
            <person name="Ota T."/>
            <person name="Suzuki Y."/>
            <person name="Nishikawa T."/>
            <person name="Otsuki T."/>
            <person name="Sugiyama T."/>
            <person name="Irie R."/>
            <person name="Wakamatsu A."/>
            <person name="Hayashi K."/>
            <person name="Sato H."/>
            <person name="Nagai K."/>
            <person name="Kimura K."/>
            <person name="Makita H."/>
            <person name="Sekine M."/>
            <person name="Obayashi M."/>
            <person name="Nishi T."/>
            <person name="Shibahara T."/>
            <person name="Tanaka T."/>
            <person name="Ishii S."/>
            <person name="Yamamoto J."/>
            <person name="Saito K."/>
            <person name="Kawai Y."/>
            <person name="Isono Y."/>
            <person name="Nakamura Y."/>
            <person name="Nagahari K."/>
            <person name="Murakami K."/>
            <person name="Yasuda T."/>
            <person name="Iwayanagi T."/>
            <person name="Wagatsuma M."/>
            <person name="Shiratori A."/>
            <person name="Sudo H."/>
            <person name="Hosoiri T."/>
            <person name="Kaku Y."/>
            <person name="Kodaira H."/>
            <person name="Kondo H."/>
            <person name="Sugawara M."/>
            <person name="Takahashi M."/>
            <person name="Kanda K."/>
            <person name="Yokoi T."/>
            <person name="Furuya T."/>
            <person name="Kikkawa E."/>
            <person name="Omura Y."/>
            <person name="Abe K."/>
            <person name="Kamihara K."/>
            <person name="Katsuta N."/>
            <person name="Sato K."/>
            <person name="Tanikawa M."/>
            <person name="Yamazaki M."/>
            <person name="Ninomiya K."/>
            <person name="Ishibashi T."/>
            <person name="Yamashita H."/>
            <person name="Murakawa K."/>
            <person name="Fujimori K."/>
            <person name="Tanai H."/>
            <person name="Kimata M."/>
            <person name="Watanabe M."/>
            <person name="Hiraoka S."/>
            <person name="Chiba Y."/>
            <person name="Ishida S."/>
            <person name="Ono Y."/>
            <person name="Takiguchi S."/>
            <person name="Watanabe S."/>
            <person name="Yosida M."/>
            <person name="Hotuta T."/>
            <person name="Kusano J."/>
            <person name="Kanehori K."/>
            <person name="Takahashi-Fujii A."/>
            <person name="Hara H."/>
            <person name="Tanase T.-O."/>
            <person name="Nomura Y."/>
            <person name="Togiya S."/>
            <person name="Komai F."/>
            <person name="Hara R."/>
            <person name="Takeuchi K."/>
            <person name="Arita M."/>
            <person name="Imose N."/>
            <person name="Musashino K."/>
            <person name="Yuuki H."/>
            <person name="Oshima A."/>
            <person name="Sasaki N."/>
            <person name="Aotsuka S."/>
            <person name="Yoshikawa Y."/>
            <person name="Matsunawa H."/>
            <person name="Ichihara T."/>
            <person name="Shiohata N."/>
            <person name="Sano S."/>
            <person name="Moriya S."/>
            <person name="Momiyama H."/>
            <person name="Satoh N."/>
            <person name="Takami S."/>
            <person name="Terashima Y."/>
            <person name="Suzuki O."/>
            <person name="Nakagawa S."/>
            <person name="Senoh A."/>
            <person name="Mizoguchi H."/>
            <person name="Goto Y."/>
            <person name="Shimizu F."/>
            <person name="Wakebe H."/>
            <person name="Hishigaki H."/>
            <person name="Watanabe T."/>
            <person name="Sugiyama A."/>
            <person name="Takemoto M."/>
            <person name="Kawakami B."/>
            <person name="Yamazaki M."/>
            <person name="Watanabe K."/>
            <person name="Kumagai A."/>
            <person name="Itakura S."/>
            <person name="Fukuzumi Y."/>
            <person name="Fujimori Y."/>
            <person name="Komiyama M."/>
            <person name="Tashiro H."/>
            <person name="Tanigami A."/>
            <person name="Fujiwara T."/>
            <person name="Ono T."/>
            <person name="Yamada K."/>
            <person name="Fujii Y."/>
            <person name="Ozaki K."/>
            <person name="Hirao M."/>
            <person name="Ohmori Y."/>
            <person name="Kawabata A."/>
            <person name="Hikiji T."/>
            <person name="Kobatake N."/>
            <person name="Inagaki H."/>
            <person name="Ikema Y."/>
            <person name="Okamoto S."/>
            <person name="Okitani R."/>
            <person name="Kawakami T."/>
            <person name="Noguchi S."/>
            <person name="Itoh T."/>
            <person name="Shigeta K."/>
            <person name="Senba T."/>
            <person name="Matsumura K."/>
            <person name="Nakajima Y."/>
            <person name="Mizuno T."/>
            <person name="Morinaga M."/>
            <person name="Sasaki M."/>
            <person name="Togashi T."/>
            <person name="Oyama M."/>
            <person name="Hata H."/>
            <person name="Watanabe M."/>
            <person name="Komatsu T."/>
            <person name="Mizushima-Sugano J."/>
            <person name="Satoh T."/>
            <person name="Shirai Y."/>
            <person name="Takahashi Y."/>
            <person name="Nakagawa K."/>
            <person name="Okumura K."/>
            <person name="Nagase T."/>
            <person name="Nomura N."/>
            <person name="Kikuchi H."/>
            <person name="Masuho Y."/>
            <person name="Yamashita R."/>
            <person name="Nakai K."/>
            <person name="Yada T."/>
            <person name="Nakamura Y."/>
            <person name="Ohara O."/>
            <person name="Isogai T."/>
            <person name="Sugano S."/>
        </authorList>
    </citation>
    <scope>NUCLEOTIDE SEQUENCE [LARGE SCALE MRNA] OF 1-692</scope>
</reference>
<reference key="3">
    <citation type="journal article" date="2009" name="Science">
        <title>Lysine acetylation targets protein complexes and co-regulates major cellular functions.</title>
        <authorList>
            <person name="Choudhary C."/>
            <person name="Kumar C."/>
            <person name="Gnad F."/>
            <person name="Nielsen M.L."/>
            <person name="Rehman M."/>
            <person name="Walther T.C."/>
            <person name="Olsen J.V."/>
            <person name="Mann M."/>
        </authorList>
    </citation>
    <scope>ACETYLATION [LARGE SCALE ANALYSIS] AT LYS-466 AND LYS-539</scope>
    <scope>IDENTIFICATION BY MASS SPECTROMETRY [LARGE SCALE ANALYSIS]</scope>
</reference>
<reference key="4">
    <citation type="journal article" date="2017" name="Nat. Struct. Mol. Biol.">
        <title>Site-specific mapping of the human SUMO proteome reveals co-modification with phosphorylation.</title>
        <authorList>
            <person name="Hendriks I.A."/>
            <person name="Lyon D."/>
            <person name="Young C."/>
            <person name="Jensen L.J."/>
            <person name="Vertegaal A.C."/>
            <person name="Nielsen M.L."/>
        </authorList>
    </citation>
    <scope>SUMOYLATION [LARGE SCALE ANALYSIS] AT LYS-761 AND LYS-768</scope>
    <scope>IDENTIFICATION BY MASS SPECTROMETRY [LARGE SCALE ANALYSIS]</scope>
</reference>
<sequence>MNLTEDCMVFEDVAIYFSQEEWGILNDAQRHLHSNVMLENFALLSSVGCWHGAKDEEVPSKQCVSVRVLQVTIPKPALSTLKAQPCKMCSSILKDILHLAEHDGTHPEQGLYTCAAEHDLHQKEQIREKLTRSDEWRPSFVNHSAHVGERNFTCTQGGKDFTASSDLLQQQVLNSGWKLYRDTQDGEAFQGEQNDFNSSQGGKDFCHQHGLFEHQKTHNGERPYEFSECGELFRYNSNLIKYQQNHAGERPYEGTEYGKTFIRKSNLVQHQKIHSEGFLSKRSDPIEHQEILSRPTPYECTQCGKAFLTQAHLVGHQKTHTGEQPYECNKCGKFFMYNSKLIRHQKVHTGERRYECSECGKLFMDSFTLGRHQRVHTGERPFECSICGKFFSHRSTLNMHQRVHAGKRLYKCSECGKAFSLKHNVVQHLKIHTGERPYECTECEKAFVRKSHLVQHQKIHTDAFSKRSDLIQHKRIDIRPRPYTCSECGKAFLTQAHLVGHQKIHTGERPYECTQCAKAFVRKSHLVQHEKIHTDAFSKRSDLIQHKRIDLRPRPYVCSECGKAFLTQAHLDGHQKIQTGERRYECNECGKFFLDSYKLVIHQRIHTGEKPYKCSKCGKFFRYRCTLSRHQKVHTGERPYECSECGKFFRDSYKLIIHQRVHTGEKPYECSNCGKFLRYRSTFIKHHKVCTGEKPHECSKCRELFRTKSSLIIHQQSHTGESPFKLRECGKDFNKCNTGQRQKTHTGERSYECGESSKVFKYNSSLIKHQIIHTGKRP</sequence>
<dbReference type="EMBL" id="AC004076">
    <property type="protein sequence ID" value="AAB97932.1"/>
    <property type="status" value="ALT_SEQ"/>
    <property type="molecule type" value="Genomic_DNA"/>
</dbReference>
<dbReference type="EMBL" id="AK122794">
    <property type="status" value="NOT_ANNOTATED_CDS"/>
    <property type="molecule type" value="mRNA"/>
</dbReference>
<dbReference type="CCDS" id="CCDS33132.2"/>
<dbReference type="RefSeq" id="NP_001018855.2">
    <property type="nucleotide sequence ID" value="NM_001023561.4"/>
</dbReference>
<dbReference type="RefSeq" id="NP_001308882.1">
    <property type="nucleotide sequence ID" value="NM_001321953.1"/>
</dbReference>
<dbReference type="RefSeq" id="NP_001308883.1">
    <property type="nucleotide sequence ID" value="NM_001321954.1"/>
</dbReference>
<dbReference type="RefSeq" id="XP_016882291.1">
    <property type="nucleotide sequence ID" value="XM_017026802.1"/>
</dbReference>
<dbReference type="SMR" id="O43361"/>
<dbReference type="BioGRID" id="132749">
    <property type="interactions" value="6"/>
</dbReference>
<dbReference type="FunCoup" id="O43361">
    <property type="interactions" value="2"/>
</dbReference>
<dbReference type="IntAct" id="O43361">
    <property type="interactions" value="4"/>
</dbReference>
<dbReference type="STRING" id="9606.ENSP00000333980"/>
<dbReference type="GlyGen" id="O43361">
    <property type="glycosylation" value="1 site, 1 O-linked glycan (1 site)"/>
</dbReference>
<dbReference type="iPTMnet" id="O43361"/>
<dbReference type="PhosphoSitePlus" id="O43361"/>
<dbReference type="BioMuta" id="ZNF749"/>
<dbReference type="jPOST" id="O43361"/>
<dbReference type="MassIVE" id="O43361"/>
<dbReference type="PaxDb" id="9606-ENSP00000333980"/>
<dbReference type="PeptideAtlas" id="O43361"/>
<dbReference type="ProteomicsDB" id="48910"/>
<dbReference type="Antibodypedia" id="51139">
    <property type="antibodies" value="36 antibodies from 7 providers"/>
</dbReference>
<dbReference type="DNASU" id="388567"/>
<dbReference type="Ensembl" id="ENST00000334181.5">
    <property type="protein sequence ID" value="ENSP00000333980.4"/>
    <property type="gene ID" value="ENSG00000186230.7"/>
</dbReference>
<dbReference type="GeneID" id="388567"/>
<dbReference type="KEGG" id="hsa:388567"/>
<dbReference type="MANE-Select" id="ENST00000334181.5">
    <property type="protein sequence ID" value="ENSP00000333980.4"/>
    <property type="RefSeq nucleotide sequence ID" value="NM_001023561.4"/>
    <property type="RefSeq protein sequence ID" value="NP_001018855.2"/>
</dbReference>
<dbReference type="UCSC" id="uc002qoq.3">
    <property type="organism name" value="human"/>
</dbReference>
<dbReference type="AGR" id="HGNC:32783"/>
<dbReference type="CTD" id="388567"/>
<dbReference type="GeneCards" id="ZNF749"/>
<dbReference type="HGNC" id="HGNC:32783">
    <property type="gene designation" value="ZNF749"/>
</dbReference>
<dbReference type="HPA" id="ENSG00000186230">
    <property type="expression patterns" value="Low tissue specificity"/>
</dbReference>
<dbReference type="neXtProt" id="NX_O43361"/>
<dbReference type="VEuPathDB" id="HostDB:ENSG00000186230"/>
<dbReference type="eggNOG" id="KOG1721">
    <property type="taxonomic scope" value="Eukaryota"/>
</dbReference>
<dbReference type="GeneTree" id="ENSGT00940000164862"/>
<dbReference type="HOGENOM" id="CLU_002678_17_1_1"/>
<dbReference type="InParanoid" id="O43361"/>
<dbReference type="OMA" id="HKVCTGE"/>
<dbReference type="OrthoDB" id="6077919at2759"/>
<dbReference type="PAN-GO" id="O43361">
    <property type="GO annotations" value="3 GO annotations based on evolutionary models"/>
</dbReference>
<dbReference type="PhylomeDB" id="O43361"/>
<dbReference type="TreeFam" id="TF339848"/>
<dbReference type="PathwayCommons" id="O43361"/>
<dbReference type="Reactome" id="R-HSA-212436">
    <property type="pathway name" value="Generic Transcription Pathway"/>
</dbReference>
<dbReference type="SignaLink" id="O43361"/>
<dbReference type="BioGRID-ORCS" id="388567">
    <property type="hits" value="9 hits in 1179 CRISPR screens"/>
</dbReference>
<dbReference type="GenomeRNAi" id="388567"/>
<dbReference type="Pharos" id="O43361">
    <property type="development level" value="Tdark"/>
</dbReference>
<dbReference type="PRO" id="PR:O43361"/>
<dbReference type="Proteomes" id="UP000005640">
    <property type="component" value="Chromosome 19"/>
</dbReference>
<dbReference type="RNAct" id="O43361">
    <property type="molecule type" value="protein"/>
</dbReference>
<dbReference type="Bgee" id="ENSG00000186230">
    <property type="expression patterns" value="Expressed in mucosa of transverse colon and 99 other cell types or tissues"/>
</dbReference>
<dbReference type="ExpressionAtlas" id="O43361">
    <property type="expression patterns" value="baseline and differential"/>
</dbReference>
<dbReference type="GO" id="GO:0005634">
    <property type="term" value="C:nucleus"/>
    <property type="evidence" value="ECO:0000318"/>
    <property type="project" value="GO_Central"/>
</dbReference>
<dbReference type="GO" id="GO:0000981">
    <property type="term" value="F:DNA-binding transcription factor activity, RNA polymerase II-specific"/>
    <property type="evidence" value="ECO:0000318"/>
    <property type="project" value="GO_Central"/>
</dbReference>
<dbReference type="GO" id="GO:0000977">
    <property type="term" value="F:RNA polymerase II transcription regulatory region sequence-specific DNA binding"/>
    <property type="evidence" value="ECO:0000318"/>
    <property type="project" value="GO_Central"/>
</dbReference>
<dbReference type="GO" id="GO:0008270">
    <property type="term" value="F:zinc ion binding"/>
    <property type="evidence" value="ECO:0007669"/>
    <property type="project" value="UniProtKB-KW"/>
</dbReference>
<dbReference type="GO" id="GO:0006357">
    <property type="term" value="P:regulation of transcription by RNA polymerase II"/>
    <property type="evidence" value="ECO:0000318"/>
    <property type="project" value="GO_Central"/>
</dbReference>
<dbReference type="CDD" id="cd07765">
    <property type="entry name" value="KRAB_A-box"/>
    <property type="match status" value="1"/>
</dbReference>
<dbReference type="FunFam" id="3.30.160.60:FF:001766">
    <property type="entry name" value="Zinc finger protein 17"/>
    <property type="match status" value="1"/>
</dbReference>
<dbReference type="FunFam" id="3.30.160.60:FF:002343">
    <property type="entry name" value="Zinc finger protein 33A"/>
    <property type="match status" value="2"/>
</dbReference>
<dbReference type="FunFam" id="3.30.160.60:FF:001498">
    <property type="entry name" value="Zinc finger protein 404"/>
    <property type="match status" value="1"/>
</dbReference>
<dbReference type="FunFam" id="3.30.160.60:FF:000443">
    <property type="entry name" value="Zinc finger protein 41"/>
    <property type="match status" value="3"/>
</dbReference>
<dbReference type="FunFam" id="3.30.160.60:FF:002004">
    <property type="entry name" value="Zinc finger protein 473"/>
    <property type="match status" value="1"/>
</dbReference>
<dbReference type="FunFam" id="3.30.160.60:FF:001174">
    <property type="entry name" value="zinc finger protein 527 isoform X1"/>
    <property type="match status" value="1"/>
</dbReference>
<dbReference type="FunFam" id="3.30.160.60:FF:000094">
    <property type="entry name" value="Zinc finger protein 605"/>
    <property type="match status" value="1"/>
</dbReference>
<dbReference type="FunFam" id="3.30.160.60:FF:000098">
    <property type="entry name" value="Zinc finger protein 614"/>
    <property type="match status" value="5"/>
</dbReference>
<dbReference type="FunFam" id="3.30.160.60:FF:001630">
    <property type="entry name" value="Zinc finger protein 888"/>
    <property type="match status" value="1"/>
</dbReference>
<dbReference type="FunFam" id="3.30.160.60:FF:003143">
    <property type="entry name" value="ZNF749 isoform 1"/>
    <property type="match status" value="1"/>
</dbReference>
<dbReference type="Gene3D" id="6.10.140.140">
    <property type="match status" value="1"/>
</dbReference>
<dbReference type="Gene3D" id="3.30.160.60">
    <property type="entry name" value="Classic Zinc Finger"/>
    <property type="match status" value="17"/>
</dbReference>
<dbReference type="InterPro" id="IPR001909">
    <property type="entry name" value="KRAB"/>
</dbReference>
<dbReference type="InterPro" id="IPR036051">
    <property type="entry name" value="KRAB_dom_sf"/>
</dbReference>
<dbReference type="InterPro" id="IPR056436">
    <property type="entry name" value="Znf-C2H2_ZIC1-5/GLI1-3-like"/>
</dbReference>
<dbReference type="InterPro" id="IPR036236">
    <property type="entry name" value="Znf_C2H2_sf"/>
</dbReference>
<dbReference type="InterPro" id="IPR013087">
    <property type="entry name" value="Znf_C2H2_type"/>
</dbReference>
<dbReference type="PANTHER" id="PTHR24393:SF136">
    <property type="entry name" value="LD28458P-RELATED"/>
    <property type="match status" value="1"/>
</dbReference>
<dbReference type="PANTHER" id="PTHR24393">
    <property type="entry name" value="ZINC FINGER PROTEIN"/>
    <property type="match status" value="1"/>
</dbReference>
<dbReference type="Pfam" id="PF01352">
    <property type="entry name" value="KRAB"/>
    <property type="match status" value="1"/>
</dbReference>
<dbReference type="Pfam" id="PF00096">
    <property type="entry name" value="zf-C2H2"/>
    <property type="match status" value="11"/>
</dbReference>
<dbReference type="Pfam" id="PF23561">
    <property type="entry name" value="zf-C2H2_15"/>
    <property type="match status" value="1"/>
</dbReference>
<dbReference type="Pfam" id="PF13912">
    <property type="entry name" value="zf-C2H2_6"/>
    <property type="match status" value="1"/>
</dbReference>
<dbReference type="SMART" id="SM00349">
    <property type="entry name" value="KRAB"/>
    <property type="match status" value="1"/>
</dbReference>
<dbReference type="SMART" id="SM00355">
    <property type="entry name" value="ZnF_C2H2"/>
    <property type="match status" value="16"/>
</dbReference>
<dbReference type="SUPFAM" id="SSF57667">
    <property type="entry name" value="beta-beta-alpha zinc fingers"/>
    <property type="match status" value="11"/>
</dbReference>
<dbReference type="SUPFAM" id="SSF109640">
    <property type="entry name" value="KRAB domain (Kruppel-associated box)"/>
    <property type="match status" value="1"/>
</dbReference>
<dbReference type="PROSITE" id="PS50805">
    <property type="entry name" value="KRAB"/>
    <property type="match status" value="1"/>
</dbReference>
<dbReference type="PROSITE" id="PS00028">
    <property type="entry name" value="ZINC_FINGER_C2H2_1"/>
    <property type="match status" value="13"/>
</dbReference>
<dbReference type="PROSITE" id="PS50157">
    <property type="entry name" value="ZINC_FINGER_C2H2_2"/>
    <property type="match status" value="17"/>
</dbReference>
<gene>
    <name type="primary">ZNF749</name>
</gene>